<protein>
    <recommendedName>
        <fullName>M-zodatoxin-Lt8p</fullName>
        <shortName>M-ZDTX-Lt8p</shortName>
    </recommendedName>
    <alternativeName>
        <fullName>Cytoinsectotoxin 1-15</fullName>
    </alternativeName>
</protein>
<keyword id="KW-0044">Antibiotic</keyword>
<keyword id="KW-0929">Antimicrobial</keyword>
<keyword id="KW-0204">Cytolysis</keyword>
<keyword id="KW-0354">Hemolysis</keyword>
<keyword id="KW-0964">Secreted</keyword>
<keyword id="KW-0732">Signal</keyword>
<keyword id="KW-0800">Toxin</keyword>
<proteinExistence type="evidence at transcript level"/>
<name>CT115_LACTA</name>
<evidence type="ECO:0000250" key="1"/>
<evidence type="ECO:0000255" key="2"/>
<evidence type="ECO:0000305" key="3"/>
<gene>
    <name type="primary">cit 1-15</name>
</gene>
<sequence length="118" mass="13416">AESKPAESEHELAEVEEENELADLEDAVWLEHLADLSDLEEARGFFGNTWKKIKGKADKIMLKKAVKLMVKKEGISKEEAQAKVDAMSKKQIRLYLLKYYGKKSSSKSVRKIVISKSF</sequence>
<organism>
    <name type="scientific">Lachesana tarabaevi</name>
    <name type="common">Spider</name>
    <dbReference type="NCBI Taxonomy" id="379576"/>
    <lineage>
        <taxon>Eukaryota</taxon>
        <taxon>Metazoa</taxon>
        <taxon>Ecdysozoa</taxon>
        <taxon>Arthropoda</taxon>
        <taxon>Chelicerata</taxon>
        <taxon>Arachnida</taxon>
        <taxon>Araneae</taxon>
        <taxon>Araneomorphae</taxon>
        <taxon>Entelegynae</taxon>
        <taxon>Entelegynae incertae sedis</taxon>
        <taxon>Zodariidae</taxon>
        <taxon>Lachesana</taxon>
    </lineage>
</organism>
<comment type="function">
    <text evidence="1">Insecticidal, cytolytic and antimicrobial peptide. Forms voltage-dependent, ion-permeable channels in membranes. At high concentration causes cell membrane lysis (By similarity).</text>
</comment>
<comment type="subcellular location">
    <subcellularLocation>
        <location evidence="1">Secreted</location>
    </subcellularLocation>
</comment>
<comment type="tissue specificity">
    <text>Expressed by the venom gland.</text>
</comment>
<comment type="similarity">
    <text evidence="3">Belongs to the cationic peptide 06 (cytoinsectotoxin) family.</text>
</comment>
<feature type="signal peptide" evidence="2">
    <location>
        <begin position="1" status="less than"/>
        <end position="3"/>
    </location>
</feature>
<feature type="propeptide" id="PRO_0000380149" evidence="1">
    <location>
        <begin position="4"/>
        <end position="43"/>
    </location>
</feature>
<feature type="chain" id="PRO_0000380150" description="M-zodatoxin-Lt8p">
    <location>
        <begin position="44"/>
        <end position="118"/>
    </location>
</feature>
<feature type="non-terminal residue">
    <location>
        <position position="1"/>
    </location>
</feature>
<dbReference type="ArachnoServer" id="AS000769">
    <property type="toxin name" value="M-zodatoxin-Lt8p"/>
</dbReference>
<dbReference type="GO" id="GO:0005576">
    <property type="term" value="C:extracellular region"/>
    <property type="evidence" value="ECO:0007669"/>
    <property type="project" value="UniProtKB-SubCell"/>
</dbReference>
<dbReference type="GO" id="GO:0090729">
    <property type="term" value="F:toxin activity"/>
    <property type="evidence" value="ECO:0007669"/>
    <property type="project" value="UniProtKB-KW"/>
</dbReference>
<dbReference type="GO" id="GO:0042742">
    <property type="term" value="P:defense response to bacterium"/>
    <property type="evidence" value="ECO:0007669"/>
    <property type="project" value="UniProtKB-KW"/>
</dbReference>
<dbReference type="GO" id="GO:0031640">
    <property type="term" value="P:killing of cells of another organism"/>
    <property type="evidence" value="ECO:0007669"/>
    <property type="project" value="UniProtKB-KW"/>
</dbReference>
<dbReference type="InterPro" id="IPR018802">
    <property type="entry name" value="Latarcin_precursor"/>
</dbReference>
<dbReference type="Pfam" id="PF10279">
    <property type="entry name" value="Latarcin"/>
    <property type="match status" value="1"/>
</dbReference>
<accession>P0CAZ8</accession>
<reference key="1">
    <citation type="journal article" date="2008" name="Biochem. J.">
        <title>Cyto-insectotoxins, a novel class of cytolytic and insecticidal peptides from spider venom.</title>
        <authorList>
            <person name="Vassilevski A.A."/>
            <person name="Kozlov S.A."/>
            <person name="Samsonova O.V."/>
            <person name="Egorova N.S."/>
            <person name="Karpunin D.V."/>
            <person name="Pluzhnikov K.A."/>
            <person name="Feofanov A.V."/>
            <person name="Grishin E.V."/>
        </authorList>
    </citation>
    <scope>NUCLEOTIDE SEQUENCE [MRNA]</scope>
    <source>
        <tissue>Venom gland</tissue>
    </source>
</reference>